<feature type="chain" id="PRO_0000057391" description="tRNA pseudouridine synthase A">
    <location>
        <begin position="1"/>
        <end position="242"/>
    </location>
</feature>
<feature type="active site" description="Nucleophile" evidence="1">
    <location>
        <position position="51"/>
    </location>
</feature>
<feature type="binding site" evidence="1">
    <location>
        <position position="107"/>
    </location>
    <ligand>
        <name>substrate</name>
    </ligand>
</feature>
<name>TRUA_HELPJ</name>
<gene>
    <name evidence="1" type="primary">truA</name>
    <name type="synonym">hisT</name>
    <name type="ordered locus">jhp_1019</name>
</gene>
<protein>
    <recommendedName>
        <fullName evidence="1">tRNA pseudouridine synthase A</fullName>
        <ecNumber evidence="1">5.4.99.12</ecNumber>
    </recommendedName>
    <alternativeName>
        <fullName evidence="1">tRNA pseudouridine(38-40) synthase</fullName>
    </alternativeName>
    <alternativeName>
        <fullName evidence="1">tRNA pseudouridylate synthase I</fullName>
    </alternativeName>
    <alternativeName>
        <fullName evidence="1">tRNA-uridine isomerase I</fullName>
    </alternativeName>
</protein>
<sequence length="242" mass="27192">MRCFKAIVAYDGAYFLGYAKQPNKLGVQDKIESALNALGIKSGVIAAGRTDKGVHANNQALSFHAPKHWNAAKLFHYLAPKLAPHIVLKKLEEKNFHARFDAQKRAYRYLLTKNLKTPFLAPYIACGDYGSLDALNIALKQFIGKHDFSMFKKEGGATTNPNRIIFNALAYKTFIMGHECVVFKIIGDAFLRSSVRLIIQACVQYSLEKITLAEIQAQIHNLKATIRTPIMANGLYLHRVYY</sequence>
<proteinExistence type="inferred from homology"/>
<evidence type="ECO:0000255" key="1">
    <source>
        <dbReference type="HAMAP-Rule" id="MF_00171"/>
    </source>
</evidence>
<reference key="1">
    <citation type="journal article" date="1999" name="Nature">
        <title>Genomic sequence comparison of two unrelated isolates of the human gastric pathogen Helicobacter pylori.</title>
        <authorList>
            <person name="Alm R.A."/>
            <person name="Ling L.-S.L."/>
            <person name="Moir D.T."/>
            <person name="King B.L."/>
            <person name="Brown E.D."/>
            <person name="Doig P.C."/>
            <person name="Smith D.R."/>
            <person name="Noonan B."/>
            <person name="Guild B.C."/>
            <person name="deJonge B.L."/>
            <person name="Carmel G."/>
            <person name="Tummino P.J."/>
            <person name="Caruso A."/>
            <person name="Uria-Nickelsen M."/>
            <person name="Mills D.M."/>
            <person name="Ives C."/>
            <person name="Gibson R."/>
            <person name="Merberg D."/>
            <person name="Mills S.D."/>
            <person name="Jiang Q."/>
            <person name="Taylor D.E."/>
            <person name="Vovis G.F."/>
            <person name="Trust T.J."/>
        </authorList>
    </citation>
    <scope>NUCLEOTIDE SEQUENCE [LARGE SCALE GENOMIC DNA]</scope>
    <source>
        <strain>J99 / ATCC 700824</strain>
    </source>
</reference>
<organism>
    <name type="scientific">Helicobacter pylori (strain J99 / ATCC 700824)</name>
    <name type="common">Campylobacter pylori J99</name>
    <dbReference type="NCBI Taxonomy" id="85963"/>
    <lineage>
        <taxon>Bacteria</taxon>
        <taxon>Pseudomonadati</taxon>
        <taxon>Campylobacterota</taxon>
        <taxon>Epsilonproteobacteria</taxon>
        <taxon>Campylobacterales</taxon>
        <taxon>Helicobacteraceae</taxon>
        <taxon>Helicobacter</taxon>
    </lineage>
</organism>
<dbReference type="EC" id="5.4.99.12" evidence="1"/>
<dbReference type="EMBL" id="AE001439">
    <property type="protein sequence ID" value="AAD06601.1"/>
    <property type="molecule type" value="Genomic_DNA"/>
</dbReference>
<dbReference type="PIR" id="F71858">
    <property type="entry name" value="F71858"/>
</dbReference>
<dbReference type="RefSeq" id="WP_001203235.1">
    <property type="nucleotide sequence ID" value="NC_000921.1"/>
</dbReference>
<dbReference type="SMR" id="Q9ZKC0"/>
<dbReference type="KEGG" id="hpj:jhp_1019"/>
<dbReference type="PATRIC" id="fig|85963.30.peg.1571"/>
<dbReference type="eggNOG" id="COG0101">
    <property type="taxonomic scope" value="Bacteria"/>
</dbReference>
<dbReference type="Proteomes" id="UP000000804">
    <property type="component" value="Chromosome"/>
</dbReference>
<dbReference type="GO" id="GO:0003723">
    <property type="term" value="F:RNA binding"/>
    <property type="evidence" value="ECO:0007669"/>
    <property type="project" value="InterPro"/>
</dbReference>
<dbReference type="GO" id="GO:0160147">
    <property type="term" value="F:tRNA pseudouridine(38-40) synthase activity"/>
    <property type="evidence" value="ECO:0007669"/>
    <property type="project" value="UniProtKB-EC"/>
</dbReference>
<dbReference type="GO" id="GO:0031119">
    <property type="term" value="P:tRNA pseudouridine synthesis"/>
    <property type="evidence" value="ECO:0007669"/>
    <property type="project" value="UniProtKB-UniRule"/>
</dbReference>
<dbReference type="CDD" id="cd02570">
    <property type="entry name" value="PseudoU_synth_EcTruA"/>
    <property type="match status" value="1"/>
</dbReference>
<dbReference type="FunFam" id="3.30.70.580:FF:000023">
    <property type="entry name" value="tRNA pseudouridine synthase A"/>
    <property type="match status" value="1"/>
</dbReference>
<dbReference type="Gene3D" id="3.30.70.660">
    <property type="entry name" value="Pseudouridine synthase I, catalytic domain, C-terminal subdomain"/>
    <property type="match status" value="1"/>
</dbReference>
<dbReference type="Gene3D" id="3.30.70.580">
    <property type="entry name" value="Pseudouridine synthase I, catalytic domain, N-terminal subdomain"/>
    <property type="match status" value="1"/>
</dbReference>
<dbReference type="HAMAP" id="MF_00171">
    <property type="entry name" value="TruA"/>
    <property type="match status" value="1"/>
</dbReference>
<dbReference type="InterPro" id="IPR020103">
    <property type="entry name" value="PsdUridine_synth_cat_dom_sf"/>
</dbReference>
<dbReference type="InterPro" id="IPR001406">
    <property type="entry name" value="PsdUridine_synth_TruA"/>
</dbReference>
<dbReference type="InterPro" id="IPR020097">
    <property type="entry name" value="PsdUridine_synth_TruA_a/b_dom"/>
</dbReference>
<dbReference type="InterPro" id="IPR020095">
    <property type="entry name" value="PsdUridine_synth_TruA_C"/>
</dbReference>
<dbReference type="InterPro" id="IPR020094">
    <property type="entry name" value="TruA/RsuA/RluB/E/F_N"/>
</dbReference>
<dbReference type="NCBIfam" id="TIGR00071">
    <property type="entry name" value="hisT_truA"/>
    <property type="match status" value="1"/>
</dbReference>
<dbReference type="PANTHER" id="PTHR11142">
    <property type="entry name" value="PSEUDOURIDYLATE SYNTHASE"/>
    <property type="match status" value="1"/>
</dbReference>
<dbReference type="PANTHER" id="PTHR11142:SF0">
    <property type="entry name" value="TRNA PSEUDOURIDINE SYNTHASE-LIKE 1"/>
    <property type="match status" value="1"/>
</dbReference>
<dbReference type="Pfam" id="PF01416">
    <property type="entry name" value="PseudoU_synth_1"/>
    <property type="match status" value="2"/>
</dbReference>
<dbReference type="PIRSF" id="PIRSF001430">
    <property type="entry name" value="tRNA_psdUrid_synth"/>
    <property type="match status" value="1"/>
</dbReference>
<dbReference type="SUPFAM" id="SSF55120">
    <property type="entry name" value="Pseudouridine synthase"/>
    <property type="match status" value="1"/>
</dbReference>
<accession>Q9ZKC0</accession>
<keyword id="KW-0413">Isomerase</keyword>
<keyword id="KW-0819">tRNA processing</keyword>
<comment type="function">
    <text evidence="1">Formation of pseudouridine at positions 38, 39 and 40 in the anticodon stem and loop of transfer RNAs.</text>
</comment>
<comment type="catalytic activity">
    <reaction evidence="1">
        <text>uridine(38/39/40) in tRNA = pseudouridine(38/39/40) in tRNA</text>
        <dbReference type="Rhea" id="RHEA:22376"/>
        <dbReference type="Rhea" id="RHEA-COMP:10085"/>
        <dbReference type="Rhea" id="RHEA-COMP:10087"/>
        <dbReference type="ChEBI" id="CHEBI:65314"/>
        <dbReference type="ChEBI" id="CHEBI:65315"/>
        <dbReference type="EC" id="5.4.99.12"/>
    </reaction>
</comment>
<comment type="subunit">
    <text evidence="1">Homodimer.</text>
</comment>
<comment type="similarity">
    <text evidence="1">Belongs to the tRNA pseudouridine synthase TruA family.</text>
</comment>